<sequence length="131" mass="15187">MRHYEIVFMVHPDQSEQVPGMIERYSAAITGAEGKIHRLEDWGRRQLAYPINKLHKAHYVLMNVEAPQEVIDELETTFRFNDAVIRSMIMRTKHAVTEASPMVKAKDERRERRDDFANETADDAEAGDSEE</sequence>
<dbReference type="EMBL" id="CP000880">
    <property type="protein sequence ID" value="ABX23078.1"/>
    <property type="molecule type" value="Genomic_DNA"/>
</dbReference>
<dbReference type="SMR" id="A9MFL1"/>
<dbReference type="STRING" id="41514.SARI_03242"/>
<dbReference type="KEGG" id="ses:SARI_03242"/>
<dbReference type="HOGENOM" id="CLU_113441_6_1_6"/>
<dbReference type="Proteomes" id="UP000002084">
    <property type="component" value="Chromosome"/>
</dbReference>
<dbReference type="GO" id="GO:0022627">
    <property type="term" value="C:cytosolic small ribosomal subunit"/>
    <property type="evidence" value="ECO:0007669"/>
    <property type="project" value="TreeGrafter"/>
</dbReference>
<dbReference type="GO" id="GO:0070181">
    <property type="term" value="F:small ribosomal subunit rRNA binding"/>
    <property type="evidence" value="ECO:0007669"/>
    <property type="project" value="TreeGrafter"/>
</dbReference>
<dbReference type="GO" id="GO:0003735">
    <property type="term" value="F:structural constituent of ribosome"/>
    <property type="evidence" value="ECO:0007669"/>
    <property type="project" value="InterPro"/>
</dbReference>
<dbReference type="GO" id="GO:0006412">
    <property type="term" value="P:translation"/>
    <property type="evidence" value="ECO:0007669"/>
    <property type="project" value="UniProtKB-UniRule"/>
</dbReference>
<dbReference type="CDD" id="cd00473">
    <property type="entry name" value="bS6"/>
    <property type="match status" value="1"/>
</dbReference>
<dbReference type="FunFam" id="3.30.70.60:FF:000003">
    <property type="entry name" value="30S ribosomal protein S6"/>
    <property type="match status" value="1"/>
</dbReference>
<dbReference type="Gene3D" id="3.30.70.60">
    <property type="match status" value="1"/>
</dbReference>
<dbReference type="HAMAP" id="MF_00360">
    <property type="entry name" value="Ribosomal_bS6"/>
    <property type="match status" value="1"/>
</dbReference>
<dbReference type="InterPro" id="IPR000529">
    <property type="entry name" value="Ribosomal_bS6"/>
</dbReference>
<dbReference type="InterPro" id="IPR020815">
    <property type="entry name" value="Ribosomal_bS6_CS"/>
</dbReference>
<dbReference type="InterPro" id="IPR035980">
    <property type="entry name" value="Ribosomal_bS6_sf"/>
</dbReference>
<dbReference type="InterPro" id="IPR020814">
    <property type="entry name" value="Ribosomal_S6_plastid/chlpt"/>
</dbReference>
<dbReference type="InterPro" id="IPR014717">
    <property type="entry name" value="Transl_elong_EF1B/ribsomal_bS6"/>
</dbReference>
<dbReference type="NCBIfam" id="TIGR00166">
    <property type="entry name" value="S6"/>
    <property type="match status" value="1"/>
</dbReference>
<dbReference type="PANTHER" id="PTHR21011">
    <property type="entry name" value="MITOCHONDRIAL 28S RIBOSOMAL PROTEIN S6"/>
    <property type="match status" value="1"/>
</dbReference>
<dbReference type="PANTHER" id="PTHR21011:SF1">
    <property type="entry name" value="SMALL RIBOSOMAL SUBUNIT PROTEIN BS6M"/>
    <property type="match status" value="1"/>
</dbReference>
<dbReference type="Pfam" id="PF01250">
    <property type="entry name" value="Ribosomal_S6"/>
    <property type="match status" value="1"/>
</dbReference>
<dbReference type="SUPFAM" id="SSF54995">
    <property type="entry name" value="Ribosomal protein S6"/>
    <property type="match status" value="1"/>
</dbReference>
<dbReference type="PROSITE" id="PS01048">
    <property type="entry name" value="RIBOSOMAL_S6"/>
    <property type="match status" value="1"/>
</dbReference>
<proteinExistence type="inferred from homology"/>
<organism>
    <name type="scientific">Salmonella arizonae (strain ATCC BAA-731 / CDC346-86 / RSK2980)</name>
    <dbReference type="NCBI Taxonomy" id="41514"/>
    <lineage>
        <taxon>Bacteria</taxon>
        <taxon>Pseudomonadati</taxon>
        <taxon>Pseudomonadota</taxon>
        <taxon>Gammaproteobacteria</taxon>
        <taxon>Enterobacterales</taxon>
        <taxon>Enterobacteriaceae</taxon>
        <taxon>Salmonella</taxon>
    </lineage>
</organism>
<keyword id="KW-1185">Reference proteome</keyword>
<keyword id="KW-0687">Ribonucleoprotein</keyword>
<keyword id="KW-0689">Ribosomal protein</keyword>
<keyword id="KW-0694">RNA-binding</keyword>
<keyword id="KW-0699">rRNA-binding</keyword>
<feature type="chain" id="PRO_1000079462" description="Small ribosomal subunit protein bS6">
    <location>
        <begin position="1"/>
        <end position="131"/>
    </location>
</feature>
<feature type="region of interest" description="Disordered" evidence="2">
    <location>
        <begin position="96"/>
        <end position="131"/>
    </location>
</feature>
<feature type="compositionally biased region" description="Basic and acidic residues" evidence="2">
    <location>
        <begin position="104"/>
        <end position="116"/>
    </location>
</feature>
<feature type="compositionally biased region" description="Acidic residues" evidence="2">
    <location>
        <begin position="120"/>
        <end position="131"/>
    </location>
</feature>
<accession>A9MFL1</accession>
<name>RS6_SALAR</name>
<gene>
    <name evidence="1" type="primary">rpsF</name>
    <name type="ordered locus">SARI_03242</name>
</gene>
<evidence type="ECO:0000255" key="1">
    <source>
        <dbReference type="HAMAP-Rule" id="MF_00360"/>
    </source>
</evidence>
<evidence type="ECO:0000256" key="2">
    <source>
        <dbReference type="SAM" id="MobiDB-lite"/>
    </source>
</evidence>
<evidence type="ECO:0000305" key="3"/>
<reference key="1">
    <citation type="submission" date="2007-11" db="EMBL/GenBank/DDBJ databases">
        <authorList>
            <consortium name="The Salmonella enterica serovar Arizonae Genome Sequencing Project"/>
            <person name="McClelland M."/>
            <person name="Sanderson E.K."/>
            <person name="Porwollik S."/>
            <person name="Spieth J."/>
            <person name="Clifton W.S."/>
            <person name="Fulton R."/>
            <person name="Chunyan W."/>
            <person name="Wollam A."/>
            <person name="Shah N."/>
            <person name="Pepin K."/>
            <person name="Bhonagiri V."/>
            <person name="Nash W."/>
            <person name="Johnson M."/>
            <person name="Thiruvilangam P."/>
            <person name="Wilson R."/>
        </authorList>
    </citation>
    <scope>NUCLEOTIDE SEQUENCE [LARGE SCALE GENOMIC DNA]</scope>
    <source>
        <strain>ATCC BAA-731 / CDC346-86 / RSK2980</strain>
    </source>
</reference>
<comment type="function">
    <text evidence="1">Binds together with bS18 to 16S ribosomal RNA.</text>
</comment>
<comment type="similarity">
    <text evidence="1">Belongs to the bacterial ribosomal protein bS6 family.</text>
</comment>
<protein>
    <recommendedName>
        <fullName evidence="1">Small ribosomal subunit protein bS6</fullName>
    </recommendedName>
    <alternativeName>
        <fullName evidence="3">30S ribosomal protein S6</fullName>
    </alternativeName>
</protein>